<comment type="function">
    <text>Crystallins are the dominant structural components of the vertebrate eye lens.</text>
</comment>
<comment type="subunit">
    <text>Homo/heterodimer, or complexes of higher-order. The structure of beta-crystallin oligomers seems to be stabilized through interactions between the N-terminal arms.</text>
</comment>
<comment type="interaction">
    <interactant intactId="EBI-7519424">
        <id>P53674</id>
    </interactant>
    <interactant intactId="EBI-11978055">
        <id>Q10567-3</id>
        <label>AP1B1</label>
    </interactant>
    <organismsDiffer>false</organismsDiffer>
    <experiments>3</experiments>
</comment>
<comment type="interaction">
    <interactant intactId="EBI-7519424">
        <id>P53674</id>
    </interactant>
    <interactant intactId="EBI-7043337">
        <id>P05813</id>
        <label>CRYBA1</label>
    </interactant>
    <organismsDiffer>false</organismsDiffer>
    <experiments>9</experiments>
</comment>
<comment type="interaction">
    <interactant intactId="EBI-7519424">
        <id>P53674</id>
    </interactant>
    <interactant intactId="EBI-7519711">
        <id>P53673</id>
        <label>CRYBA4</label>
    </interactant>
    <organismsDiffer>false</organismsDiffer>
    <experiments>3</experiments>
</comment>
<comment type="interaction">
    <interactant intactId="EBI-7519424">
        <id>P53674</id>
    </interactant>
    <interactant intactId="EBI-742054">
        <id>Q96D03</id>
        <label>DDIT4L</label>
    </interactant>
    <organismsDiffer>false</organismsDiffer>
    <experiments>3</experiments>
</comment>
<comment type="interaction">
    <interactant intactId="EBI-7519424">
        <id>P53674</id>
    </interactant>
    <interactant intactId="EBI-949824">
        <id>O00471</id>
        <label>EXOC5</label>
    </interactant>
    <organismsDiffer>false</organismsDiffer>
    <experiments>3</experiments>
</comment>
<comment type="interaction">
    <interactant intactId="EBI-7519424">
        <id>P53674</id>
    </interactant>
    <interactant intactId="EBI-1052570">
        <id>O95995</id>
        <label>GAS8</label>
    </interactant>
    <organismsDiffer>false</organismsDiffer>
    <experiments>3</experiments>
</comment>
<comment type="interaction">
    <interactant intactId="EBI-7519424">
        <id>P53674</id>
    </interactant>
    <interactant intactId="EBI-710997">
        <id>P54274</id>
        <label>TERF1</label>
    </interactant>
    <organismsDiffer>false</organismsDiffer>
    <experiments>2</experiments>
</comment>
<comment type="domain">
    <text>Has a two-domain beta-structure, folded into four very similar Greek key motifs.</text>
</comment>
<comment type="PTM">
    <text>Specific cleavages in the N-terminal arm occur during lens maturation and give rise to truncated forms, leading to impaired oligomerization and protein insolubilization.</text>
</comment>
<comment type="mass spectrometry" mass="27941.0" error="6.0" method="Electrospray" evidence="10"/>
<comment type="disease" evidence="3 4 6 7 8 9">
    <disease id="DI-01234">
        <name>Cataract 17, multiple types</name>
        <acronym>CTRCT17</acronym>
        <description>An opacification of the crystalline lens of the eye that frequently results in visual impairment or blindness. Opacities vary in morphology, are often confined to a portion of the lens, and may be static or progressive. In general, the more posteriorly located and dense an opacity, the greater the impact on visual function. CTRCT17 includes nuclear and pulverulent cataracts, among others. Nuclear cataracts affect the central nucleus of the eye, are often not highly visually significant. The density of the opacities varies greatly from fine dots to a dense, white and chalk-like, central cataract. The condition is usually bilateral. Nuclear cataracts are often combined with opacified cortical fibers encircling the nuclear opacity, which are referred to as cortical riders. Pulverulent cataracts are characterized by a dust-like, 'pulverised' appearance of the opacities which can be found in any part of the lens.</description>
        <dbReference type="MIM" id="611544"/>
    </disease>
    <text>The disease is caused by variants affecting the gene represented in this entry.</text>
</comment>
<comment type="disease">
    <text evidence="12 13">CRYBB1 mutations may be a cause of congenital cataract and microcornea syndrome, a disease characterized by the association of congenital cataract and microcornea without any other systemic anomaly or dysmorphism. Clinical findings include a corneal diameter inferior to 10 mm in both meridians in an otherwise normal eye, and an inherited cataract, which is most often bilateral posterior polar with opacification in the lens periphery. The cataract progresses to form a total cataract after visual maturity has been achieved, requiring cataract extraction in the first to third decade of life (PubMed:16110300, PubMed:21972112).</text>
</comment>
<comment type="similarity">
    <text evidence="11">Belongs to the beta/gamma-crystallin family.</text>
</comment>
<comment type="online information" name="Eye disease Crystallin, beta-B1 (CRYBB1)">
    <link uri="https://databases.lovd.nl/shared/genes/CRYBB1"/>
    <text>Leiden Open Variation Database (LOVD)</text>
</comment>
<proteinExistence type="evidence at protein level"/>
<keyword id="KW-0002">3D-structure</keyword>
<keyword id="KW-0007">Acetylation</keyword>
<keyword id="KW-0898">Cataract</keyword>
<keyword id="KW-0903">Direct protein sequencing</keyword>
<keyword id="KW-0225">Disease variant</keyword>
<keyword id="KW-0273">Eye lens protein</keyword>
<keyword id="KW-1267">Proteomics identification</keyword>
<keyword id="KW-1185">Reference proteome</keyword>
<keyword id="KW-0677">Repeat</keyword>
<reference key="1">
    <citation type="journal article" date="1996" name="J. Biol. Chem.">
        <title>The sequence of human betaB1-crystallin cDNA allows mass spectrometric detection of betaB1 protein missing portions of its N-terminal extension.</title>
        <authorList>
            <person name="David L.L."/>
            <person name="Lampi K.J."/>
            <person name="Lund A.L."/>
            <person name="Smith J.B."/>
        </authorList>
    </citation>
    <scope>NUCLEOTIDE SEQUENCE [MRNA]</scope>
    <scope>PROTEIN SEQUENCE OF 2-22 AND 25-252</scope>
    <scope>CLEAVAGE OF INITIATOR METHIONINE</scope>
    <scope>ACETYLATION AT SER-2</scope>
    <scope>MASS SPECTROMETRY</scope>
    <source>
        <tissue>Lens</tissue>
    </source>
</reference>
<reference key="2">
    <citation type="journal article" date="2004" name="Genome Biol.">
        <title>A genome annotation-driven approach to cloning the human ORFeome.</title>
        <authorList>
            <person name="Collins J.E."/>
            <person name="Wright C.L."/>
            <person name="Edwards C.A."/>
            <person name="Davis M.P."/>
            <person name="Grinham J.A."/>
            <person name="Cole C.G."/>
            <person name="Goward M.E."/>
            <person name="Aguado B."/>
            <person name="Mallya M."/>
            <person name="Mokrab Y."/>
            <person name="Huckle E.J."/>
            <person name="Beare D.M."/>
            <person name="Dunham I."/>
        </authorList>
    </citation>
    <scope>NUCLEOTIDE SEQUENCE [LARGE SCALE MRNA]</scope>
</reference>
<reference key="3">
    <citation type="journal article" date="1999" name="Nature">
        <title>The DNA sequence of human chromosome 22.</title>
        <authorList>
            <person name="Dunham I."/>
            <person name="Hunt A.R."/>
            <person name="Collins J.E."/>
            <person name="Bruskiewich R."/>
            <person name="Beare D.M."/>
            <person name="Clamp M."/>
            <person name="Smink L.J."/>
            <person name="Ainscough R."/>
            <person name="Almeida J.P."/>
            <person name="Babbage A.K."/>
            <person name="Bagguley C."/>
            <person name="Bailey J."/>
            <person name="Barlow K.F."/>
            <person name="Bates K.N."/>
            <person name="Beasley O.P."/>
            <person name="Bird C.P."/>
            <person name="Blakey S.E."/>
            <person name="Bridgeman A.M."/>
            <person name="Buck D."/>
            <person name="Burgess J."/>
            <person name="Burrill W.D."/>
            <person name="Burton J."/>
            <person name="Carder C."/>
            <person name="Carter N.P."/>
            <person name="Chen Y."/>
            <person name="Clark G."/>
            <person name="Clegg S.M."/>
            <person name="Cobley V.E."/>
            <person name="Cole C.G."/>
            <person name="Collier R.E."/>
            <person name="Connor R."/>
            <person name="Conroy D."/>
            <person name="Corby N.R."/>
            <person name="Coville G.J."/>
            <person name="Cox A.V."/>
            <person name="Davis J."/>
            <person name="Dawson E."/>
            <person name="Dhami P.D."/>
            <person name="Dockree C."/>
            <person name="Dodsworth S.J."/>
            <person name="Durbin R.M."/>
            <person name="Ellington A.G."/>
            <person name="Evans K.L."/>
            <person name="Fey J.M."/>
            <person name="Fleming K."/>
            <person name="French L."/>
            <person name="Garner A.A."/>
            <person name="Gilbert J.G.R."/>
            <person name="Goward M.E."/>
            <person name="Grafham D.V."/>
            <person name="Griffiths M.N.D."/>
            <person name="Hall C."/>
            <person name="Hall R.E."/>
            <person name="Hall-Tamlyn G."/>
            <person name="Heathcott R.W."/>
            <person name="Ho S."/>
            <person name="Holmes S."/>
            <person name="Hunt S.E."/>
            <person name="Jones M.C."/>
            <person name="Kershaw J."/>
            <person name="Kimberley A.M."/>
            <person name="King A."/>
            <person name="Laird G.K."/>
            <person name="Langford C.F."/>
            <person name="Leversha M.A."/>
            <person name="Lloyd C."/>
            <person name="Lloyd D.M."/>
            <person name="Martyn I.D."/>
            <person name="Mashreghi-Mohammadi M."/>
            <person name="Matthews L.H."/>
            <person name="Mccann O.T."/>
            <person name="Mcclay J."/>
            <person name="Mclaren S."/>
            <person name="McMurray A.A."/>
            <person name="Milne S.A."/>
            <person name="Mortimore B.J."/>
            <person name="Odell C.N."/>
            <person name="Pavitt R."/>
            <person name="Pearce A.V."/>
            <person name="Pearson D."/>
            <person name="Phillimore B.J.C.T."/>
            <person name="Phillips S.H."/>
            <person name="Plumb R.W."/>
            <person name="Ramsay H."/>
            <person name="Ramsey Y."/>
            <person name="Rogers L."/>
            <person name="Ross M.T."/>
            <person name="Scott C.E."/>
            <person name="Sehra H.K."/>
            <person name="Skuce C.D."/>
            <person name="Smalley S."/>
            <person name="Smith M.L."/>
            <person name="Soderlund C."/>
            <person name="Spragon L."/>
            <person name="Steward C.A."/>
            <person name="Sulston J.E."/>
            <person name="Swann R.M."/>
            <person name="Vaudin M."/>
            <person name="Wall M."/>
            <person name="Wallis J.M."/>
            <person name="Whiteley M.N."/>
            <person name="Willey D.L."/>
            <person name="Williams L."/>
            <person name="Williams S.A."/>
            <person name="Williamson H."/>
            <person name="Wilmer T.E."/>
            <person name="Wilming L."/>
            <person name="Wright C.L."/>
            <person name="Hubbard T."/>
            <person name="Bentley D.R."/>
            <person name="Beck S."/>
            <person name="Rogers J."/>
            <person name="Shimizu N."/>
            <person name="Minoshima S."/>
            <person name="Kawasaki K."/>
            <person name="Sasaki T."/>
            <person name="Asakawa S."/>
            <person name="Kudoh J."/>
            <person name="Shintani A."/>
            <person name="Shibuya K."/>
            <person name="Yoshizaki Y."/>
            <person name="Aoki N."/>
            <person name="Mitsuyama S."/>
            <person name="Roe B.A."/>
            <person name="Chen F."/>
            <person name="Chu L."/>
            <person name="Crabtree J."/>
            <person name="Deschamps S."/>
            <person name="Do A."/>
            <person name="Do T."/>
            <person name="Dorman A."/>
            <person name="Fang F."/>
            <person name="Fu Y."/>
            <person name="Hu P."/>
            <person name="Hua A."/>
            <person name="Kenton S."/>
            <person name="Lai H."/>
            <person name="Lao H.I."/>
            <person name="Lewis J."/>
            <person name="Lewis S."/>
            <person name="Lin S.-P."/>
            <person name="Loh P."/>
            <person name="Malaj E."/>
            <person name="Nguyen T."/>
            <person name="Pan H."/>
            <person name="Phan S."/>
            <person name="Qi S."/>
            <person name="Qian Y."/>
            <person name="Ray L."/>
            <person name="Ren Q."/>
            <person name="Shaull S."/>
            <person name="Sloan D."/>
            <person name="Song L."/>
            <person name="Wang Q."/>
            <person name="Wang Y."/>
            <person name="Wang Z."/>
            <person name="White J."/>
            <person name="Willingham D."/>
            <person name="Wu H."/>
            <person name="Yao Z."/>
            <person name="Zhan M."/>
            <person name="Zhang G."/>
            <person name="Chissoe S."/>
            <person name="Murray J."/>
            <person name="Miller N."/>
            <person name="Minx P."/>
            <person name="Fulton R."/>
            <person name="Johnson D."/>
            <person name="Bemis G."/>
            <person name="Bentley D."/>
            <person name="Bradshaw H."/>
            <person name="Bourne S."/>
            <person name="Cordes M."/>
            <person name="Du Z."/>
            <person name="Fulton L."/>
            <person name="Goela D."/>
            <person name="Graves T."/>
            <person name="Hawkins J."/>
            <person name="Hinds K."/>
            <person name="Kemp K."/>
            <person name="Latreille P."/>
            <person name="Layman D."/>
            <person name="Ozersky P."/>
            <person name="Rohlfing T."/>
            <person name="Scheet P."/>
            <person name="Walker C."/>
            <person name="Wamsley A."/>
            <person name="Wohldmann P."/>
            <person name="Pepin K."/>
            <person name="Nelson J."/>
            <person name="Korf I."/>
            <person name="Bedell J.A."/>
            <person name="Hillier L.W."/>
            <person name="Mardis E."/>
            <person name="Waterston R."/>
            <person name="Wilson R."/>
            <person name="Emanuel B.S."/>
            <person name="Shaikh T."/>
            <person name="Kurahashi H."/>
            <person name="Saitta S."/>
            <person name="Budarf M.L."/>
            <person name="McDermid H.E."/>
            <person name="Johnson A."/>
            <person name="Wong A.C.C."/>
            <person name="Morrow B.E."/>
            <person name="Edelmann L."/>
            <person name="Kim U.J."/>
            <person name="Shizuya H."/>
            <person name="Simon M.I."/>
            <person name="Dumanski J.P."/>
            <person name="Peyrard M."/>
            <person name="Kedra D."/>
            <person name="Seroussi E."/>
            <person name="Fransson I."/>
            <person name="Tapia I."/>
            <person name="Bruder C.E."/>
            <person name="O'Brien K.P."/>
            <person name="Wilkinson P."/>
            <person name="Bodenteich A."/>
            <person name="Hartman K."/>
            <person name="Hu X."/>
            <person name="Khan A.S."/>
            <person name="Lane L."/>
            <person name="Tilahun Y."/>
            <person name="Wright H."/>
        </authorList>
    </citation>
    <scope>NUCLEOTIDE SEQUENCE [LARGE SCALE GENOMIC DNA]</scope>
</reference>
<reference key="4">
    <citation type="journal article" date="2004" name="Genome Res.">
        <title>The status, quality, and expansion of the NIH full-length cDNA project: the Mammalian Gene Collection (MGC).</title>
        <authorList>
            <consortium name="The MGC Project Team"/>
        </authorList>
    </citation>
    <scope>NUCLEOTIDE SEQUENCE [LARGE SCALE MRNA]</scope>
</reference>
<reference key="5">
    <citation type="journal article" date="1995" name="Genomics">
        <title>Assignment of the beta B1 crystallin gene (CRYBB1) to human chromosome 22 and mouse chromosome 5.</title>
        <authorList>
            <person name="Hulsebos T.J.M."/>
            <person name="Gilbert D.J."/>
            <person name="Delattre O."/>
            <person name="Smink L.J."/>
            <person name="Dunham I."/>
            <person name="Westerveld A."/>
            <person name="Thomas G."/>
            <person name="Jenkins N.A."/>
            <person name="Copeland N.G."/>
        </authorList>
    </citation>
    <scope>NUCLEOTIDE SEQUENCE [GENOMIC DNA] OF 200-246</scope>
</reference>
<reference key="6">
    <citation type="journal article" date="2002" name="Am. J. Hum. Genet.">
        <title>A nonsense mutation in CRYBB1 associated with autosomal dominant cataract linked to human chromosome 22q.</title>
        <authorList>
            <person name="Mackay D.S."/>
            <person name="Boskovska O.B."/>
            <person name="Knopf H.L."/>
            <person name="Lampi K.J."/>
            <person name="Shiels A."/>
        </authorList>
    </citation>
    <scope>INVOLVEMENT IN CTRCT17</scope>
</reference>
<reference key="7">
    <citation type="journal article" date="2005" name="Biochemistry">
        <title>Oligomerization and phase transitions in aqueous solutions of native and truncated human beta B1-crystallin.</title>
        <authorList>
            <person name="Annunziata O."/>
            <person name="Pande A."/>
            <person name="Pande J."/>
            <person name="Ogun O."/>
            <person name="Lubsen N.H."/>
            <person name="Benedek G.B."/>
        </authorList>
    </citation>
    <scope>CHARACTERIZATION</scope>
</reference>
<reference key="8">
    <citation type="journal article" date="2005" name="Mol. Vis.">
        <title>CRYBB1 mutation associated with congenital cataract and microcornea.</title>
        <authorList>
            <person name="Willoughby C.E."/>
            <person name="Shafiq A."/>
            <person name="Ferrini W."/>
            <person name="Chan L.L."/>
            <person name="Billingsley G."/>
            <person name="Priston M."/>
            <person name="Mok C."/>
            <person name="Chandna A."/>
            <person name="Kaye S."/>
            <person name="Heon E."/>
        </authorList>
    </citation>
    <scope>INVOLVEMENT IN CONGENITAL CATARACT-MICROCORNEA SYNDROME</scope>
</reference>
<reference key="9">
    <citation type="journal article" date="2003" name="Protein Sci.">
        <title>Crystal structure of truncated human betaB1-crystallin.</title>
        <authorList>
            <person name="Van Montfort R.L."/>
            <person name="Bateman O.A."/>
            <person name="Lubsen N.H."/>
            <person name="Slingsby C."/>
        </authorList>
    </citation>
    <scope>X-RAY CRYSTALLOGRAPHY (1.4 ANGSTROMS) OF 43-252</scope>
</reference>
<reference key="10">
    <citation type="journal article" date="2007" name="Invest. Ophthalmol. Vis. Sci.">
        <title>Homozygous CRYBB1 deletion mutation underlies autosomal recessive congenital cataract.</title>
        <authorList>
            <person name="Cohen D."/>
            <person name="Bar-Yosef U."/>
            <person name="Levy J."/>
            <person name="Gradstein L."/>
            <person name="Belfair N."/>
            <person name="Ofir R."/>
            <person name="Joshua S."/>
            <person name="Lifshitz T."/>
            <person name="Carmi R."/>
            <person name="Birk O.S."/>
        </authorList>
    </citation>
    <scope>INVOLVEMENT IN CTRCT17</scope>
</reference>
<reference key="11">
    <citation type="journal article" date="2011" name="Hum. Mutat.">
        <title>A novel mutation in CRYBB1 associated with congenital cataract-microcornea syndrome: the p.Ser129Arg mutation destabilizes the betaB1/betaA3-crystallin heteromer but not the betaB1-crystallin homomer.</title>
        <authorList>
            <person name="Wang K.J."/>
            <person name="Wang S."/>
            <person name="Cao N.-Q."/>
            <person name="Yan Y.-B."/>
            <person name="Zhu S.Q."/>
        </authorList>
    </citation>
    <scope>INVOLVEMENT IN CONGENITAL CATARACT-MICROCORNEA SYNDROME</scope>
    <scope>VARIANT ARG-129</scope>
    <scope>CHARACTERIZATION OF VARIANT ARG-129</scope>
</reference>
<reference key="12">
    <citation type="journal article" date="2013" name="Hum. Genet.">
        <title>Whole exome sequencing in dominant cataract identifies a new causative factor, CRYBA2, and a variety of novel alleles in known genes.</title>
        <authorList>
            <person name="Reis L.M."/>
            <person name="Tyler R.C."/>
            <person name="Muheisen S."/>
            <person name="Raggio V."/>
            <person name="Salviati L."/>
            <person name="Han D.P."/>
            <person name="Costakos D."/>
            <person name="Yonath H."/>
            <person name="Hall S."/>
            <person name="Power P."/>
            <person name="Semina E.V."/>
        </authorList>
    </citation>
    <scope>VARIANT CTRCT17 PHE-96</scope>
</reference>
<reference key="13">
    <citation type="journal article" date="2017" name="Mol. Vis.">
        <title>Mutations in crystallin genes result in congenital cataract associated with other ocular abnormalities.</title>
        <authorList>
            <person name="Sun Z."/>
            <person name="Zhou Q."/>
            <person name="Li H."/>
            <person name="Yang L."/>
            <person name="Wu S."/>
            <person name="Sui R."/>
        </authorList>
    </citation>
    <scope>VARIANT CTRCT17 CYS-230</scope>
</reference>
<reference key="14">
    <citation type="journal article" date="2018" name="Orphanet J. Rare Dis.">
        <title>Clinical and genetic characteristics of Chinese patients with familial or sporadic pediatric cataract.</title>
        <authorList>
            <person name="Li J."/>
            <person name="Leng Y."/>
            <person name="Han S."/>
            <person name="Yan L."/>
            <person name="Lu C."/>
            <person name="Luo Y."/>
            <person name="Zhang X."/>
            <person name="Cao L."/>
        </authorList>
    </citation>
    <scope>VARIANT CTRCT17 TYR-170</scope>
</reference>
<reference key="15">
    <citation type="journal article" date="2020" name="Orphanet J. Rare Dis.">
        <title>The genetic landscape of crystallins in congenital cataract.</title>
        <authorList>
            <person name="Berry V."/>
            <person name="Ionides A."/>
            <person name="Pontikos N."/>
            <person name="Georgiou M."/>
            <person name="Yu J."/>
            <person name="Ocaka L.A."/>
            <person name="Moore A.T."/>
            <person name="Quinlan R.A."/>
            <person name="Michaelides M."/>
        </authorList>
    </citation>
    <scope>VARIANTS CTRCT17 206-TYR--LYS-252 DEL AND 219-TRP--LYS-252 DEL</scope>
</reference>
<organism>
    <name type="scientific">Homo sapiens</name>
    <name type="common">Human</name>
    <dbReference type="NCBI Taxonomy" id="9606"/>
    <lineage>
        <taxon>Eukaryota</taxon>
        <taxon>Metazoa</taxon>
        <taxon>Chordata</taxon>
        <taxon>Craniata</taxon>
        <taxon>Vertebrata</taxon>
        <taxon>Euteleostomi</taxon>
        <taxon>Mammalia</taxon>
        <taxon>Eutheria</taxon>
        <taxon>Euarchontoglires</taxon>
        <taxon>Primates</taxon>
        <taxon>Haplorrhini</taxon>
        <taxon>Catarrhini</taxon>
        <taxon>Hominidae</taxon>
        <taxon>Homo</taxon>
    </lineage>
</organism>
<protein>
    <recommendedName>
        <fullName>Beta-crystallin B1</fullName>
    </recommendedName>
    <alternativeName>
        <fullName>Beta-B1 crystallin</fullName>
    </alternativeName>
</protein>
<accession>P53674</accession>
<dbReference type="EMBL" id="U35340">
    <property type="protein sequence ID" value="AAC50383.1"/>
    <property type="molecule type" value="mRNA"/>
</dbReference>
<dbReference type="EMBL" id="CR456425">
    <property type="protein sequence ID" value="CAG30311.1"/>
    <property type="molecule type" value="mRNA"/>
</dbReference>
<dbReference type="EMBL" id="Z95115">
    <property type="status" value="NOT_ANNOTATED_CDS"/>
    <property type="molecule type" value="Genomic_DNA"/>
</dbReference>
<dbReference type="EMBL" id="BC036790">
    <property type="protein sequence ID" value="AAH36790.1"/>
    <property type="molecule type" value="mRNA"/>
</dbReference>
<dbReference type="EMBL" id="X86398">
    <property type="protein sequence ID" value="CAA60150.1"/>
    <property type="molecule type" value="Genomic_DNA"/>
</dbReference>
<dbReference type="CCDS" id="CCDS13840.1"/>
<dbReference type="PIR" id="S55441">
    <property type="entry name" value="S55441"/>
</dbReference>
<dbReference type="RefSeq" id="NP_001878.1">
    <property type="nucleotide sequence ID" value="NM_001887.4"/>
</dbReference>
<dbReference type="RefSeq" id="XP_011528201.1">
    <property type="nucleotide sequence ID" value="XM_011529899.4"/>
</dbReference>
<dbReference type="RefSeq" id="XP_054181088.1">
    <property type="nucleotide sequence ID" value="XM_054325113.1"/>
</dbReference>
<dbReference type="PDB" id="1OKI">
    <property type="method" value="X-ray"/>
    <property type="resolution" value="1.40 A"/>
    <property type="chains" value="A/B=43-252"/>
</dbReference>
<dbReference type="PDBsum" id="1OKI"/>
<dbReference type="PCDDB" id="P53674"/>
<dbReference type="SMR" id="P53674"/>
<dbReference type="BioGRID" id="107804">
    <property type="interactions" value="18"/>
</dbReference>
<dbReference type="FunCoup" id="P53674">
    <property type="interactions" value="52"/>
</dbReference>
<dbReference type="IntAct" id="P53674">
    <property type="interactions" value="14"/>
</dbReference>
<dbReference type="MINT" id="P53674"/>
<dbReference type="STRING" id="9606.ENSP00000497249"/>
<dbReference type="GlyGen" id="P53674">
    <property type="glycosylation" value="1 site, 1 O-linked glycan (1 site)"/>
</dbReference>
<dbReference type="iPTMnet" id="P53674"/>
<dbReference type="PhosphoSitePlus" id="P53674"/>
<dbReference type="BioMuta" id="CRYBB1"/>
<dbReference type="DMDM" id="1706116"/>
<dbReference type="MassIVE" id="P53674"/>
<dbReference type="PaxDb" id="9606-ENSP00000215939"/>
<dbReference type="PeptideAtlas" id="P53674"/>
<dbReference type="ProteomicsDB" id="56607"/>
<dbReference type="Antibodypedia" id="24283">
    <property type="antibodies" value="170 antibodies from 27 providers"/>
</dbReference>
<dbReference type="DNASU" id="1414"/>
<dbReference type="Ensembl" id="ENST00000647684.1">
    <property type="protein sequence ID" value="ENSP00000497249.1"/>
    <property type="gene ID" value="ENSG00000100122.7"/>
</dbReference>
<dbReference type="GeneID" id="1414"/>
<dbReference type="KEGG" id="hsa:1414"/>
<dbReference type="MANE-Select" id="ENST00000647684.1">
    <property type="protein sequence ID" value="ENSP00000497249.1"/>
    <property type="RefSeq nucleotide sequence ID" value="NM_001887.4"/>
    <property type="RefSeq protein sequence ID" value="NP_001878.1"/>
</dbReference>
<dbReference type="UCSC" id="uc003acy.2">
    <property type="organism name" value="human"/>
</dbReference>
<dbReference type="AGR" id="HGNC:2397"/>
<dbReference type="CTD" id="1414"/>
<dbReference type="DisGeNET" id="1414"/>
<dbReference type="GeneCards" id="CRYBB1"/>
<dbReference type="HGNC" id="HGNC:2397">
    <property type="gene designation" value="CRYBB1"/>
</dbReference>
<dbReference type="HPA" id="ENSG00000100122">
    <property type="expression patterns" value="Tissue enhanced (epididymis)"/>
</dbReference>
<dbReference type="MalaCards" id="CRYBB1"/>
<dbReference type="MIM" id="600929">
    <property type="type" value="gene"/>
</dbReference>
<dbReference type="MIM" id="611544">
    <property type="type" value="phenotype"/>
</dbReference>
<dbReference type="neXtProt" id="NX_P53674"/>
<dbReference type="OpenTargets" id="ENSG00000100122"/>
<dbReference type="Orphanet" id="1377">
    <property type="disease" value="Cataract-microcornea syndrome"/>
</dbReference>
<dbReference type="Orphanet" id="98991">
    <property type="disease" value="Early-onset nuclear cataract"/>
</dbReference>
<dbReference type="Orphanet" id="98984">
    <property type="disease" value="Pulverulent cataract"/>
</dbReference>
<dbReference type="PharmGKB" id="PA26911"/>
<dbReference type="VEuPathDB" id="HostDB:ENSG00000100122"/>
<dbReference type="eggNOG" id="ENOG502QTJT">
    <property type="taxonomic scope" value="Eukaryota"/>
</dbReference>
<dbReference type="GeneTree" id="ENSGT00940000160516"/>
<dbReference type="HOGENOM" id="CLU_081883_0_1_1"/>
<dbReference type="InParanoid" id="P53674"/>
<dbReference type="OMA" id="RQWHHEG"/>
<dbReference type="OrthoDB" id="5411518at2759"/>
<dbReference type="PAN-GO" id="P53674">
    <property type="GO annotations" value="3 GO annotations based on evolutionary models"/>
</dbReference>
<dbReference type="PhylomeDB" id="P53674"/>
<dbReference type="TreeFam" id="TF331401"/>
<dbReference type="PathwayCommons" id="P53674"/>
<dbReference type="SignaLink" id="P53674"/>
<dbReference type="SIGNOR" id="P53674"/>
<dbReference type="BioGRID-ORCS" id="1414">
    <property type="hits" value="17 hits in 1155 CRISPR screens"/>
</dbReference>
<dbReference type="ChiTaRS" id="CRYBB1">
    <property type="organism name" value="human"/>
</dbReference>
<dbReference type="EvolutionaryTrace" id="P53674"/>
<dbReference type="GeneWiki" id="CRYBB1"/>
<dbReference type="GenomeRNAi" id="1414"/>
<dbReference type="Pharos" id="P53674">
    <property type="development level" value="Tbio"/>
</dbReference>
<dbReference type="PRO" id="PR:P53674"/>
<dbReference type="Proteomes" id="UP000005640">
    <property type="component" value="Chromosome 22"/>
</dbReference>
<dbReference type="RNAct" id="P53674">
    <property type="molecule type" value="protein"/>
</dbReference>
<dbReference type="Bgee" id="ENSG00000100122">
    <property type="expression patterns" value="Expressed in primordial germ cell in gonad and 99 other cell types or tissues"/>
</dbReference>
<dbReference type="GO" id="GO:0005212">
    <property type="term" value="F:structural constituent of eye lens"/>
    <property type="evidence" value="ECO:0000318"/>
    <property type="project" value="GO_Central"/>
</dbReference>
<dbReference type="GO" id="GO:0002088">
    <property type="term" value="P:lens development in camera-type eye"/>
    <property type="evidence" value="ECO:0000318"/>
    <property type="project" value="GO_Central"/>
</dbReference>
<dbReference type="GO" id="GO:0007601">
    <property type="term" value="P:visual perception"/>
    <property type="evidence" value="ECO:0000318"/>
    <property type="project" value="GO_Central"/>
</dbReference>
<dbReference type="FunFam" id="2.60.20.10:FF:000005">
    <property type="entry name" value="Crystallin, beta B1"/>
    <property type="match status" value="1"/>
</dbReference>
<dbReference type="FunFam" id="2.60.20.10:FF:000002">
    <property type="entry name" value="Crystallin, beta B2"/>
    <property type="match status" value="1"/>
</dbReference>
<dbReference type="Gene3D" id="2.60.20.10">
    <property type="entry name" value="Crystallins"/>
    <property type="match status" value="2"/>
</dbReference>
<dbReference type="InterPro" id="IPR050252">
    <property type="entry name" value="Beta/Gamma-Crystallin"/>
</dbReference>
<dbReference type="InterPro" id="IPR001064">
    <property type="entry name" value="Beta/gamma_crystallin"/>
</dbReference>
<dbReference type="InterPro" id="IPR011024">
    <property type="entry name" value="G_crystallin-like"/>
</dbReference>
<dbReference type="PANTHER" id="PTHR11818:SF12">
    <property type="entry name" value="BETA-CRYSTALLIN B1"/>
    <property type="match status" value="1"/>
</dbReference>
<dbReference type="PANTHER" id="PTHR11818">
    <property type="entry name" value="BETA/GAMMA CRYSTALLIN"/>
    <property type="match status" value="1"/>
</dbReference>
<dbReference type="Pfam" id="PF00030">
    <property type="entry name" value="Crystall"/>
    <property type="match status" value="2"/>
</dbReference>
<dbReference type="PRINTS" id="PR01367">
    <property type="entry name" value="BGCRYSTALLIN"/>
</dbReference>
<dbReference type="SMART" id="SM00247">
    <property type="entry name" value="XTALbg"/>
    <property type="match status" value="2"/>
</dbReference>
<dbReference type="SUPFAM" id="SSF49695">
    <property type="entry name" value="gamma-Crystallin-like"/>
    <property type="match status" value="1"/>
</dbReference>
<dbReference type="PROSITE" id="PS50915">
    <property type="entry name" value="CRYSTALLIN_BETA_GAMMA"/>
    <property type="match status" value="4"/>
</dbReference>
<gene>
    <name type="primary">CRYBB1</name>
</gene>
<evidence type="ECO:0000255" key="1">
    <source>
        <dbReference type="PROSITE-ProRule" id="PRU00028"/>
    </source>
</evidence>
<evidence type="ECO:0000256" key="2">
    <source>
        <dbReference type="SAM" id="MobiDB-lite"/>
    </source>
</evidence>
<evidence type="ECO:0000269" key="3">
    <source>
    </source>
</evidence>
<evidence type="ECO:0000269" key="4">
    <source>
    </source>
</evidence>
<evidence type="ECO:0000269" key="5">
    <source>
    </source>
</evidence>
<evidence type="ECO:0000269" key="6">
    <source>
    </source>
</evidence>
<evidence type="ECO:0000269" key="7">
    <source>
    </source>
</evidence>
<evidence type="ECO:0000269" key="8">
    <source>
    </source>
</evidence>
<evidence type="ECO:0000269" key="9">
    <source>
    </source>
</evidence>
<evidence type="ECO:0000269" key="10">
    <source>
    </source>
</evidence>
<evidence type="ECO:0000305" key="11"/>
<evidence type="ECO:0000305" key="12">
    <source>
    </source>
</evidence>
<evidence type="ECO:0000305" key="13">
    <source>
    </source>
</evidence>
<evidence type="ECO:0007829" key="14">
    <source>
        <dbReference type="PDB" id="1OKI"/>
    </source>
</evidence>
<feature type="initiator methionine" description="Removed" evidence="10">
    <location>
        <position position="1"/>
    </location>
</feature>
<feature type="chain" id="PRO_0000057550" description="Beta-crystallin B1">
    <location>
        <begin position="2"/>
        <end position="252"/>
    </location>
</feature>
<feature type="domain" description="Beta/gamma crystallin 'Greek key' 1" evidence="1">
    <location>
        <begin position="59"/>
        <end position="98"/>
    </location>
</feature>
<feature type="domain" description="Beta/gamma crystallin 'Greek key' 2" evidence="1">
    <location>
        <begin position="99"/>
        <end position="143"/>
    </location>
</feature>
<feature type="domain" description="Beta/gamma crystallin 'Greek key' 3" evidence="1">
    <location>
        <begin position="149"/>
        <end position="190"/>
    </location>
</feature>
<feature type="domain" description="Beta/gamma crystallin 'Greek key' 4" evidence="1">
    <location>
        <begin position="191"/>
        <end position="233"/>
    </location>
</feature>
<feature type="region of interest" description="Disordered" evidence="2">
    <location>
        <begin position="1"/>
        <end position="42"/>
    </location>
</feature>
<feature type="region of interest" description="N-terminal arm">
    <location>
        <begin position="2"/>
        <end position="58"/>
    </location>
</feature>
<feature type="region of interest" description="Connecting peptide">
    <location>
        <begin position="144"/>
        <end position="148"/>
    </location>
</feature>
<feature type="region of interest" description="C-terminal arm">
    <location>
        <begin position="235"/>
        <end position="252"/>
    </location>
</feature>
<feature type="compositionally biased region" description="Low complexity" evidence="2">
    <location>
        <begin position="1"/>
        <end position="15"/>
    </location>
</feature>
<feature type="compositionally biased region" description="Low complexity" evidence="2">
    <location>
        <begin position="24"/>
        <end position="37"/>
    </location>
</feature>
<feature type="modified residue" description="N-acetylserine" evidence="10">
    <location>
        <position position="2"/>
    </location>
</feature>
<feature type="sequence variant" id="VAR_070030" description="In CTRCT17." evidence="6">
    <original>V</original>
    <variation>F</variation>
    <location>
        <position position="96"/>
    </location>
</feature>
<feature type="sequence variant" id="VAR_065296" description="Found in a family with autosomal dominant congenital cataract and microcornea; likely pathogenic; significantly decreased thermal stability of CRYBB1/CRYBA1-crystallin heteromer but not CRYBB1-crystallin homomer; dbSNP:rs1114167433." evidence="5">
    <original>S</original>
    <variation>R</variation>
    <location>
        <position position="129"/>
    </location>
</feature>
<feature type="sequence variant" id="VAR_084783" description="In CTRCT17; uncertain significance." evidence="8">
    <original>D</original>
    <variation>Y</variation>
    <location>
        <position position="170"/>
    </location>
</feature>
<feature type="sequence variant" id="VAR_084784" description="In CTRCT17; uncertain significance." evidence="9">
    <location>
        <begin position="206"/>
        <end position="252"/>
    </location>
</feature>
<feature type="sequence variant" id="VAR_084785" description="In CTRCT17; uncertain significance." evidence="9">
    <location>
        <begin position="219"/>
        <end position="252"/>
    </location>
</feature>
<feature type="sequence variant" id="VAR_084786" description="In CTRCT17; uncertain significance; dbSNP:rs762942964." evidence="7">
    <original>R</original>
    <variation>C</variation>
    <location>
        <position position="230"/>
    </location>
</feature>
<feature type="strand" evidence="14">
    <location>
        <begin position="60"/>
        <end position="66"/>
    </location>
</feature>
<feature type="turn" evidence="14">
    <location>
        <begin position="67"/>
        <end position="69"/>
    </location>
</feature>
<feature type="strand" evidence="14">
    <location>
        <begin position="70"/>
        <end position="78"/>
    </location>
</feature>
<feature type="turn" evidence="14">
    <location>
        <begin position="83"/>
        <end position="87"/>
    </location>
</feature>
<feature type="strand" evidence="14">
    <location>
        <begin position="93"/>
        <end position="98"/>
    </location>
</feature>
<feature type="strand" evidence="14">
    <location>
        <begin position="101"/>
        <end position="106"/>
    </location>
</feature>
<feature type="helix" evidence="14">
    <location>
        <begin position="107"/>
        <end position="109"/>
    </location>
</feature>
<feature type="strand" evidence="14">
    <location>
        <begin position="110"/>
        <end position="116"/>
    </location>
</feature>
<feature type="strand" evidence="14">
    <location>
        <begin position="118"/>
        <end position="121"/>
    </location>
</feature>
<feature type="helix" evidence="14">
    <location>
        <begin position="124"/>
        <end position="127"/>
    </location>
</feature>
<feature type="strand" evidence="14">
    <location>
        <begin position="138"/>
        <end position="141"/>
    </location>
</feature>
<feature type="strand" evidence="14">
    <location>
        <begin position="150"/>
        <end position="156"/>
    </location>
</feature>
<feature type="helix" evidence="14">
    <location>
        <begin position="157"/>
        <end position="159"/>
    </location>
</feature>
<feature type="strand" evidence="14">
    <location>
        <begin position="160"/>
        <end position="169"/>
    </location>
</feature>
<feature type="helix" evidence="14">
    <location>
        <begin position="174"/>
        <end position="177"/>
    </location>
</feature>
<feature type="strand" evidence="14">
    <location>
        <begin position="185"/>
        <end position="198"/>
    </location>
</feature>
<feature type="turn" evidence="14">
    <location>
        <begin position="199"/>
        <end position="201"/>
    </location>
</feature>
<feature type="strand" evidence="14">
    <location>
        <begin position="202"/>
        <end position="208"/>
    </location>
</feature>
<feature type="strand" evidence="14">
    <location>
        <begin position="210"/>
        <end position="215"/>
    </location>
</feature>
<feature type="helix" evidence="14">
    <location>
        <begin position="216"/>
        <end position="219"/>
    </location>
</feature>
<feature type="strand" evidence="14">
    <location>
        <begin position="228"/>
        <end position="232"/>
    </location>
</feature>
<sequence length="252" mass="28023">MSQAAKASASATVAVNPGPDTKGKGAPPAGTSPSPGTTLAPTTVPITSAKAAELPPGNYRLVVFELENFQGRRAEFSGECSNLADRGFDRVRSIIVSAGPWVAFEQSNFRGEMFILEKGEYPRWNTWSSSYRSDRLMSFRPIKMDAQEHKISLFEGANFKGNTIEIQGDDAPSLWVYGFSDRVGSVKVSSGTWVGYQYPGYRGYQYLLEPGDFRHWNEWGAFQPQMQSLRRLRDKQWHLEGSFPVLATEPPK</sequence>
<name>CRBB1_HUMAN</name>